<feature type="chain" id="PRO_0000251895" description="Putative uncharacterized protein RUSC1-AS1">
    <location>
        <begin position="1"/>
        <end position="236"/>
    </location>
</feature>
<feature type="region of interest" description="Disordered" evidence="1">
    <location>
        <begin position="1"/>
        <end position="73"/>
    </location>
</feature>
<feature type="splice variant" id="VSP_020778" description="In isoform 2." evidence="2">
    <original>VCPFSPHSSPSFSHHRTLSLFISPAPLSCPAPRAQVHRSTPMGRALLTRVLLEPLRPWACPR</original>
    <variation>GPTTLSQAPSGSGTVLEWPVADTEPPASCICCPGCQCQFCRSHWGPQRGQGTLQSCTLKPAR</variation>
    <location>
        <begin position="119"/>
        <end position="180"/>
    </location>
</feature>
<feature type="splice variant" id="VSP_020779" description="In isoform 2." evidence="2">
    <location>
        <begin position="181"/>
        <end position="236"/>
    </location>
</feature>
<feature type="sequence variant" id="VAR_050704" description="In dbSNP:rs16836822.">
    <original>R</original>
    <variation>S</variation>
    <location>
        <position position="231"/>
    </location>
</feature>
<proteinExistence type="uncertain"/>
<accession>Q66K80</accession>
<accession>Q8NA07</accession>
<keyword id="KW-0025">Alternative splicing</keyword>
<keyword id="KW-1185">Reference proteome</keyword>
<protein>
    <recommendedName>
        <fullName>Putative uncharacterized protein RUSC1-AS1</fullName>
    </recommendedName>
    <alternativeName>
        <fullName>RUSC1 antisense RNA 1</fullName>
    </alternativeName>
    <alternativeName>
        <fullName>RUSC1 antisense gene protein 1</fullName>
    </alternativeName>
</protein>
<gene>
    <name type="primary">RUSC1-AS1</name>
    <name type="synonym">C1orf104</name>
</gene>
<organism>
    <name type="scientific">Homo sapiens</name>
    <name type="common">Human</name>
    <dbReference type="NCBI Taxonomy" id="9606"/>
    <lineage>
        <taxon>Eukaryota</taxon>
        <taxon>Metazoa</taxon>
        <taxon>Chordata</taxon>
        <taxon>Craniata</taxon>
        <taxon>Vertebrata</taxon>
        <taxon>Euteleostomi</taxon>
        <taxon>Mammalia</taxon>
        <taxon>Eutheria</taxon>
        <taxon>Euarchontoglires</taxon>
        <taxon>Primates</taxon>
        <taxon>Haplorrhini</taxon>
        <taxon>Catarrhini</taxon>
        <taxon>Hominidae</taxon>
        <taxon>Homo</taxon>
    </lineage>
</organism>
<sequence length="236" mass="24494">MEPGGSENAAALWISEGGRGPGRGPGPEWTSRSLLPQSGPALQPTPYSQRKGPRETHPDALKGGGGWGWGNTQSLSGECRKGVGAGEEKDGAAVSLSTPHLLAASAGLQPAPSPLGTAVCPFSPHSSPSFSHHRTLSLFISPAPLSCPAPRAQVHRSTPMGRALLTRVLLEPLRPWACPRLPRSPPGGAQSGRGGALAQPTLRCAAAPLRAWAWRSSDPPPAFSVFCHPPRGFDIS</sequence>
<reference key="1">
    <citation type="journal article" date="2004" name="Nat. Genet.">
        <title>Complete sequencing and characterization of 21,243 full-length human cDNAs.</title>
        <authorList>
            <person name="Ota T."/>
            <person name="Suzuki Y."/>
            <person name="Nishikawa T."/>
            <person name="Otsuki T."/>
            <person name="Sugiyama T."/>
            <person name="Irie R."/>
            <person name="Wakamatsu A."/>
            <person name="Hayashi K."/>
            <person name="Sato H."/>
            <person name="Nagai K."/>
            <person name="Kimura K."/>
            <person name="Makita H."/>
            <person name="Sekine M."/>
            <person name="Obayashi M."/>
            <person name="Nishi T."/>
            <person name="Shibahara T."/>
            <person name="Tanaka T."/>
            <person name="Ishii S."/>
            <person name="Yamamoto J."/>
            <person name="Saito K."/>
            <person name="Kawai Y."/>
            <person name="Isono Y."/>
            <person name="Nakamura Y."/>
            <person name="Nagahari K."/>
            <person name="Murakami K."/>
            <person name="Yasuda T."/>
            <person name="Iwayanagi T."/>
            <person name="Wagatsuma M."/>
            <person name="Shiratori A."/>
            <person name="Sudo H."/>
            <person name="Hosoiri T."/>
            <person name="Kaku Y."/>
            <person name="Kodaira H."/>
            <person name="Kondo H."/>
            <person name="Sugawara M."/>
            <person name="Takahashi M."/>
            <person name="Kanda K."/>
            <person name="Yokoi T."/>
            <person name="Furuya T."/>
            <person name="Kikkawa E."/>
            <person name="Omura Y."/>
            <person name="Abe K."/>
            <person name="Kamihara K."/>
            <person name="Katsuta N."/>
            <person name="Sato K."/>
            <person name="Tanikawa M."/>
            <person name="Yamazaki M."/>
            <person name="Ninomiya K."/>
            <person name="Ishibashi T."/>
            <person name="Yamashita H."/>
            <person name="Murakawa K."/>
            <person name="Fujimori K."/>
            <person name="Tanai H."/>
            <person name="Kimata M."/>
            <person name="Watanabe M."/>
            <person name="Hiraoka S."/>
            <person name="Chiba Y."/>
            <person name="Ishida S."/>
            <person name="Ono Y."/>
            <person name="Takiguchi S."/>
            <person name="Watanabe S."/>
            <person name="Yosida M."/>
            <person name="Hotuta T."/>
            <person name="Kusano J."/>
            <person name="Kanehori K."/>
            <person name="Takahashi-Fujii A."/>
            <person name="Hara H."/>
            <person name="Tanase T.-O."/>
            <person name="Nomura Y."/>
            <person name="Togiya S."/>
            <person name="Komai F."/>
            <person name="Hara R."/>
            <person name="Takeuchi K."/>
            <person name="Arita M."/>
            <person name="Imose N."/>
            <person name="Musashino K."/>
            <person name="Yuuki H."/>
            <person name="Oshima A."/>
            <person name="Sasaki N."/>
            <person name="Aotsuka S."/>
            <person name="Yoshikawa Y."/>
            <person name="Matsunawa H."/>
            <person name="Ichihara T."/>
            <person name="Shiohata N."/>
            <person name="Sano S."/>
            <person name="Moriya S."/>
            <person name="Momiyama H."/>
            <person name="Satoh N."/>
            <person name="Takami S."/>
            <person name="Terashima Y."/>
            <person name="Suzuki O."/>
            <person name="Nakagawa S."/>
            <person name="Senoh A."/>
            <person name="Mizoguchi H."/>
            <person name="Goto Y."/>
            <person name="Shimizu F."/>
            <person name="Wakebe H."/>
            <person name="Hishigaki H."/>
            <person name="Watanabe T."/>
            <person name="Sugiyama A."/>
            <person name="Takemoto M."/>
            <person name="Kawakami B."/>
            <person name="Yamazaki M."/>
            <person name="Watanabe K."/>
            <person name="Kumagai A."/>
            <person name="Itakura S."/>
            <person name="Fukuzumi Y."/>
            <person name="Fujimori Y."/>
            <person name="Komiyama M."/>
            <person name="Tashiro H."/>
            <person name="Tanigami A."/>
            <person name="Fujiwara T."/>
            <person name="Ono T."/>
            <person name="Yamada K."/>
            <person name="Fujii Y."/>
            <person name="Ozaki K."/>
            <person name="Hirao M."/>
            <person name="Ohmori Y."/>
            <person name="Kawabata A."/>
            <person name="Hikiji T."/>
            <person name="Kobatake N."/>
            <person name="Inagaki H."/>
            <person name="Ikema Y."/>
            <person name="Okamoto S."/>
            <person name="Okitani R."/>
            <person name="Kawakami T."/>
            <person name="Noguchi S."/>
            <person name="Itoh T."/>
            <person name="Shigeta K."/>
            <person name="Senba T."/>
            <person name="Matsumura K."/>
            <person name="Nakajima Y."/>
            <person name="Mizuno T."/>
            <person name="Morinaga M."/>
            <person name="Sasaki M."/>
            <person name="Togashi T."/>
            <person name="Oyama M."/>
            <person name="Hata H."/>
            <person name="Watanabe M."/>
            <person name="Komatsu T."/>
            <person name="Mizushima-Sugano J."/>
            <person name="Satoh T."/>
            <person name="Shirai Y."/>
            <person name="Takahashi Y."/>
            <person name="Nakagawa K."/>
            <person name="Okumura K."/>
            <person name="Nagase T."/>
            <person name="Nomura N."/>
            <person name="Kikuchi H."/>
            <person name="Masuho Y."/>
            <person name="Yamashita R."/>
            <person name="Nakai K."/>
            <person name="Yada T."/>
            <person name="Nakamura Y."/>
            <person name="Ohara O."/>
            <person name="Isogai T."/>
            <person name="Sugano S."/>
        </authorList>
    </citation>
    <scope>NUCLEOTIDE SEQUENCE [LARGE SCALE MRNA] (ISOFORM 2)</scope>
    <source>
        <tissue>Testis</tissue>
    </source>
</reference>
<reference key="2">
    <citation type="journal article" date="2006" name="Nature">
        <title>The DNA sequence and biological annotation of human chromosome 1.</title>
        <authorList>
            <person name="Gregory S.G."/>
            <person name="Barlow K.F."/>
            <person name="McLay K.E."/>
            <person name="Kaul R."/>
            <person name="Swarbreck D."/>
            <person name="Dunham A."/>
            <person name="Scott C.E."/>
            <person name="Howe K.L."/>
            <person name="Woodfine K."/>
            <person name="Spencer C.C.A."/>
            <person name="Jones M.C."/>
            <person name="Gillson C."/>
            <person name="Searle S."/>
            <person name="Zhou Y."/>
            <person name="Kokocinski F."/>
            <person name="McDonald L."/>
            <person name="Evans R."/>
            <person name="Phillips K."/>
            <person name="Atkinson A."/>
            <person name="Cooper R."/>
            <person name="Jones C."/>
            <person name="Hall R.E."/>
            <person name="Andrews T.D."/>
            <person name="Lloyd C."/>
            <person name="Ainscough R."/>
            <person name="Almeida J.P."/>
            <person name="Ambrose K.D."/>
            <person name="Anderson F."/>
            <person name="Andrew R.W."/>
            <person name="Ashwell R.I.S."/>
            <person name="Aubin K."/>
            <person name="Babbage A.K."/>
            <person name="Bagguley C.L."/>
            <person name="Bailey J."/>
            <person name="Beasley H."/>
            <person name="Bethel G."/>
            <person name="Bird C.P."/>
            <person name="Bray-Allen S."/>
            <person name="Brown J.Y."/>
            <person name="Brown A.J."/>
            <person name="Buckley D."/>
            <person name="Burton J."/>
            <person name="Bye J."/>
            <person name="Carder C."/>
            <person name="Chapman J.C."/>
            <person name="Clark S.Y."/>
            <person name="Clarke G."/>
            <person name="Clee C."/>
            <person name="Cobley V."/>
            <person name="Collier R.E."/>
            <person name="Corby N."/>
            <person name="Coville G.J."/>
            <person name="Davies J."/>
            <person name="Deadman R."/>
            <person name="Dunn M."/>
            <person name="Earthrowl M."/>
            <person name="Ellington A.G."/>
            <person name="Errington H."/>
            <person name="Frankish A."/>
            <person name="Frankland J."/>
            <person name="French L."/>
            <person name="Garner P."/>
            <person name="Garnett J."/>
            <person name="Gay L."/>
            <person name="Ghori M.R.J."/>
            <person name="Gibson R."/>
            <person name="Gilby L.M."/>
            <person name="Gillett W."/>
            <person name="Glithero R.J."/>
            <person name="Grafham D.V."/>
            <person name="Griffiths C."/>
            <person name="Griffiths-Jones S."/>
            <person name="Grocock R."/>
            <person name="Hammond S."/>
            <person name="Harrison E.S.I."/>
            <person name="Hart E."/>
            <person name="Haugen E."/>
            <person name="Heath P.D."/>
            <person name="Holmes S."/>
            <person name="Holt K."/>
            <person name="Howden P.J."/>
            <person name="Hunt A.R."/>
            <person name="Hunt S.E."/>
            <person name="Hunter G."/>
            <person name="Isherwood J."/>
            <person name="James R."/>
            <person name="Johnson C."/>
            <person name="Johnson D."/>
            <person name="Joy A."/>
            <person name="Kay M."/>
            <person name="Kershaw J.K."/>
            <person name="Kibukawa M."/>
            <person name="Kimberley A.M."/>
            <person name="King A."/>
            <person name="Knights A.J."/>
            <person name="Lad H."/>
            <person name="Laird G."/>
            <person name="Lawlor S."/>
            <person name="Leongamornlert D.A."/>
            <person name="Lloyd D.M."/>
            <person name="Loveland J."/>
            <person name="Lovell J."/>
            <person name="Lush M.J."/>
            <person name="Lyne R."/>
            <person name="Martin S."/>
            <person name="Mashreghi-Mohammadi M."/>
            <person name="Matthews L."/>
            <person name="Matthews N.S.W."/>
            <person name="McLaren S."/>
            <person name="Milne S."/>
            <person name="Mistry S."/>
            <person name="Moore M.J.F."/>
            <person name="Nickerson T."/>
            <person name="O'Dell C.N."/>
            <person name="Oliver K."/>
            <person name="Palmeiri A."/>
            <person name="Palmer S.A."/>
            <person name="Parker A."/>
            <person name="Patel D."/>
            <person name="Pearce A.V."/>
            <person name="Peck A.I."/>
            <person name="Pelan S."/>
            <person name="Phelps K."/>
            <person name="Phillimore B.J."/>
            <person name="Plumb R."/>
            <person name="Rajan J."/>
            <person name="Raymond C."/>
            <person name="Rouse G."/>
            <person name="Saenphimmachak C."/>
            <person name="Sehra H.K."/>
            <person name="Sheridan E."/>
            <person name="Shownkeen R."/>
            <person name="Sims S."/>
            <person name="Skuce C.D."/>
            <person name="Smith M."/>
            <person name="Steward C."/>
            <person name="Subramanian S."/>
            <person name="Sycamore N."/>
            <person name="Tracey A."/>
            <person name="Tromans A."/>
            <person name="Van Helmond Z."/>
            <person name="Wall M."/>
            <person name="Wallis J.M."/>
            <person name="White S."/>
            <person name="Whitehead S.L."/>
            <person name="Wilkinson J.E."/>
            <person name="Willey D.L."/>
            <person name="Williams H."/>
            <person name="Wilming L."/>
            <person name="Wray P.W."/>
            <person name="Wu Z."/>
            <person name="Coulson A."/>
            <person name="Vaudin M."/>
            <person name="Sulston J.E."/>
            <person name="Durbin R.M."/>
            <person name="Hubbard T."/>
            <person name="Wooster R."/>
            <person name="Dunham I."/>
            <person name="Carter N.P."/>
            <person name="McVean G."/>
            <person name="Ross M.T."/>
            <person name="Harrow J."/>
            <person name="Olson M.V."/>
            <person name="Beck S."/>
            <person name="Rogers J."/>
            <person name="Bentley D.R."/>
        </authorList>
    </citation>
    <scope>NUCLEOTIDE SEQUENCE [LARGE SCALE GENOMIC DNA]</scope>
</reference>
<reference key="3">
    <citation type="journal article" date="2004" name="Genome Res.">
        <title>The status, quality, and expansion of the NIH full-length cDNA project: the Mammalian Gene Collection (MGC).</title>
        <authorList>
            <consortium name="The MGC Project Team"/>
        </authorList>
    </citation>
    <scope>NUCLEOTIDE SEQUENCE [LARGE SCALE MRNA] (ISOFORM 1)</scope>
    <source>
        <tissue>Colon</tissue>
        <tissue>Pancreas</tissue>
    </source>
</reference>
<dbReference type="EMBL" id="AK093295">
    <property type="protein sequence ID" value="BAC04124.1"/>
    <property type="molecule type" value="mRNA"/>
</dbReference>
<dbReference type="EMBL" id="AL139410">
    <property type="status" value="NOT_ANNOTATED_CDS"/>
    <property type="molecule type" value="Genomic_DNA"/>
</dbReference>
<dbReference type="EMBL" id="BC062571">
    <property type="protein sequence ID" value="AAH62571.1"/>
    <property type="molecule type" value="mRNA"/>
</dbReference>
<dbReference type="EMBL" id="BC080538">
    <property type="protein sequence ID" value="AAH80538.1"/>
    <property type="molecule type" value="mRNA"/>
</dbReference>
<dbReference type="BioGRID" id="129918">
    <property type="interactions" value="5"/>
</dbReference>
<dbReference type="IntAct" id="Q66K80">
    <property type="interactions" value="20"/>
</dbReference>
<dbReference type="iPTMnet" id="Q66K80"/>
<dbReference type="PhosphoSitePlus" id="Q66K80"/>
<dbReference type="BioMuta" id="HGNC:26680"/>
<dbReference type="ProteomicsDB" id="65961">
    <molecule id="Q66K80-1"/>
</dbReference>
<dbReference type="ProteomicsDB" id="65962">
    <molecule id="Q66K80-2"/>
</dbReference>
<dbReference type="AGR" id="HGNC:26680"/>
<dbReference type="GeneCards" id="RUSC1-AS1"/>
<dbReference type="HGNC" id="HGNC:26680">
    <property type="gene designation" value="RUSC1-AS1"/>
</dbReference>
<dbReference type="MalaCards" id="RUSC1-AS1"/>
<dbReference type="neXtProt" id="NX_Q66K80"/>
<dbReference type="PharmGKB" id="PA142672488"/>
<dbReference type="InParanoid" id="Q66K80"/>
<dbReference type="PAN-GO" id="Q66K80">
    <property type="GO annotations" value="0 GO annotations based on evolutionary models"/>
</dbReference>
<dbReference type="PathwayCommons" id="Q66K80"/>
<dbReference type="SignaLink" id="Q66K80"/>
<dbReference type="ChiTaRS" id="RUSC1-AS1">
    <property type="organism name" value="human"/>
</dbReference>
<dbReference type="Pharos" id="Q66K80">
    <property type="development level" value="Tdark"/>
</dbReference>
<dbReference type="Proteomes" id="UP000005640">
    <property type="component" value="Unplaced"/>
</dbReference>
<dbReference type="RNAct" id="Q66K80">
    <property type="molecule type" value="protein"/>
</dbReference>
<comment type="interaction">
    <interactant intactId="EBI-10248967">
        <id>Q66K80</id>
    </interactant>
    <interactant intactId="EBI-946046">
        <id>P54252</id>
        <label>ATXN3</label>
    </interactant>
    <organismsDiffer>false</organismsDiffer>
    <experiments>3</experiments>
</comment>
<comment type="interaction">
    <interactant intactId="EBI-10248967">
        <id>Q66K80</id>
    </interactant>
    <interactant intactId="EBI-718729">
        <id>P55212</id>
        <label>CASP6</label>
    </interactant>
    <organismsDiffer>false</organismsDiffer>
    <experiments>3</experiments>
</comment>
<comment type="interaction">
    <interactant intactId="EBI-10248967">
        <id>Q66K80</id>
    </interactant>
    <interactant intactId="EBI-6624398">
        <id>P06307</id>
        <label>CCK</label>
    </interactant>
    <organismsDiffer>false</organismsDiffer>
    <experiments>3</experiments>
</comment>
<comment type="interaction">
    <interactant intactId="EBI-10248967">
        <id>Q66K80</id>
    </interactant>
    <interactant intactId="EBI-25837549">
        <id>P28329-3</id>
        <label>CHAT</label>
    </interactant>
    <organismsDiffer>false</organismsDiffer>
    <experiments>3</experiments>
</comment>
<comment type="interaction">
    <interactant intactId="EBI-10248967">
        <id>Q66K80</id>
    </interactant>
    <interactant intactId="EBI-446479">
        <id>P99999</id>
        <label>CYCS</label>
    </interactant>
    <organismsDiffer>false</organismsDiffer>
    <experiments>3</experiments>
</comment>
<comment type="interaction">
    <interactant intactId="EBI-10248967">
        <id>Q66K80</id>
    </interactant>
    <interactant intactId="EBI-348399">
        <id>P22607</id>
        <label>FGFR3</label>
    </interactant>
    <organismsDiffer>false</organismsDiffer>
    <experiments>3</experiments>
</comment>
<comment type="interaction">
    <interactant intactId="EBI-10248967">
        <id>Q66K80</id>
    </interactant>
    <interactant intactId="EBI-747754">
        <id>P28799</id>
        <label>GRN</label>
    </interactant>
    <organismsDiffer>false</organismsDiffer>
    <experiments>3</experiments>
</comment>
<comment type="interaction">
    <interactant intactId="EBI-10248967">
        <id>Q66K80</id>
    </interactant>
    <interactant intactId="EBI-351506">
        <id>P06396</id>
        <label>GSN</label>
    </interactant>
    <organismsDiffer>false</organismsDiffer>
    <experiments>3</experiments>
</comment>
<comment type="interaction">
    <interactant intactId="EBI-10248967">
        <id>Q66K80</id>
    </interactant>
    <interactant intactId="EBI-712096">
        <id>P30519</id>
        <label>HMOX2</label>
    </interactant>
    <organismsDiffer>false</organismsDiffer>
    <experiments>3</experiments>
</comment>
<comment type="interaction">
    <interactant intactId="EBI-10248967">
        <id>Q66K80</id>
    </interactant>
    <interactant intactId="EBI-352682">
        <id>P04792</id>
        <label>HSPB1</label>
    </interactant>
    <organismsDiffer>false</organismsDiffer>
    <experiments>3</experiments>
</comment>
<comment type="interaction">
    <interactant intactId="EBI-10248967">
        <id>Q66K80</id>
    </interactant>
    <interactant intactId="EBI-466029">
        <id>P42858</id>
        <label>HTT</label>
    </interactant>
    <organismsDiffer>false</organismsDiffer>
    <experiments>6</experiments>
</comment>
<comment type="interaction">
    <interactant intactId="EBI-10248967">
        <id>Q66K80</id>
    </interactant>
    <interactant intactId="EBI-10975473">
        <id>O60333-2</id>
        <label>KIF1B</label>
    </interactant>
    <organismsDiffer>false</organismsDiffer>
    <experiments>3</experiments>
</comment>
<comment type="interaction">
    <interactant intactId="EBI-10248967">
        <id>Q66K80</id>
    </interactant>
    <interactant intactId="EBI-21591415">
        <id>P13473-2</id>
        <label>LAMP2</label>
    </interactant>
    <organismsDiffer>false</organismsDiffer>
    <experiments>3</experiments>
</comment>
<comment type="interaction">
    <interactant intactId="EBI-10248967">
        <id>Q66K80</id>
    </interactant>
    <interactant intactId="EBI-348380">
        <id>P25788</id>
        <label>PSMA3</label>
    </interactant>
    <organismsDiffer>false</organismsDiffer>
    <experiments>3</experiments>
</comment>
<comment type="interaction">
    <interactant intactId="EBI-10248967">
        <id>Q66K80</id>
    </interactant>
    <interactant intactId="EBI-286642">
        <id>P62826</id>
        <label>RAN</label>
    </interactant>
    <organismsDiffer>false</organismsDiffer>
    <experiments>3</experiments>
</comment>
<comment type="interaction">
    <interactant intactId="EBI-10248967">
        <id>Q66K80</id>
    </interactant>
    <interactant intactId="EBI-396669">
        <id>Q9Y3C5</id>
        <label>RNF11</label>
    </interactant>
    <organismsDiffer>false</organismsDiffer>
    <experiments>3</experiments>
</comment>
<comment type="interaction">
    <interactant intactId="EBI-10248967">
        <id>Q66K80</id>
    </interactant>
    <interactant intactId="EBI-720609">
        <id>O76024</id>
        <label>WFS1</label>
    </interactant>
    <organismsDiffer>false</organismsDiffer>
    <experiments>3</experiments>
</comment>
<comment type="interaction">
    <interactant intactId="EBI-10248967">
        <id>Q66K80</id>
    </interactant>
    <interactant intactId="EBI-25900580">
        <id>Q9Y649</id>
    </interactant>
    <organismsDiffer>false</organismsDiffer>
    <experiments>3</experiments>
</comment>
<comment type="alternative products">
    <event type="alternative splicing"/>
    <isoform>
        <id>Q66K80-1</id>
        <name>1</name>
        <sequence type="displayed"/>
    </isoform>
    <isoform>
        <id>Q66K80-2</id>
        <name>2</name>
        <sequence type="described" ref="VSP_020778 VSP_020779"/>
    </isoform>
</comment>
<comment type="caution">
    <text evidence="3">Product of a dubious CDS prediction.</text>
</comment>
<evidence type="ECO:0000256" key="1">
    <source>
        <dbReference type="SAM" id="MobiDB-lite"/>
    </source>
</evidence>
<evidence type="ECO:0000303" key="2">
    <source>
    </source>
</evidence>
<evidence type="ECO:0000305" key="3"/>
<name>RUAS1_HUMAN</name>